<geneLocation type="chloroplast"/>
<organism>
    <name type="scientific">Calycanthus floridus var. glaucus</name>
    <name type="common">Eastern sweetshrub</name>
    <name type="synonym">Calycanthus fertilis var. ferax</name>
    <dbReference type="NCBI Taxonomy" id="212734"/>
    <lineage>
        <taxon>Eukaryota</taxon>
        <taxon>Viridiplantae</taxon>
        <taxon>Streptophyta</taxon>
        <taxon>Embryophyta</taxon>
        <taxon>Tracheophyta</taxon>
        <taxon>Spermatophyta</taxon>
        <taxon>Magnoliopsida</taxon>
        <taxon>Magnoliidae</taxon>
        <taxon>Laurales</taxon>
        <taxon>Calycanthaceae</taxon>
        <taxon>Calycanthus</taxon>
    </lineage>
</organism>
<evidence type="ECO:0000255" key="1">
    <source>
        <dbReference type="HAMAP-Rule" id="MF_01330"/>
    </source>
</evidence>
<proteinExistence type="inferred from homology"/>
<keyword id="KW-0067">ATP-binding</keyword>
<keyword id="KW-0150">Chloroplast</keyword>
<keyword id="KW-0547">Nucleotide-binding</keyword>
<keyword id="KW-0934">Plastid</keyword>
<reference key="1">
    <citation type="journal article" date="2003" name="Plant Syst. Evol.">
        <title>The chloroplast genome of the 'basal' angiosperm Calycanthus fertilis -- structural and phylogenetic analyses.</title>
        <authorList>
            <person name="Goremykin V."/>
            <person name="Hirsch-Ernst K.I."/>
            <person name="Woelfl S."/>
            <person name="Hellwig F.H."/>
        </authorList>
    </citation>
    <scope>NUCLEOTIDE SEQUENCE [LARGE SCALE GENOMIC DNA]</scope>
</reference>
<comment type="function">
    <text>Probable ATPase of unknown function. Its presence in a non-photosynthetic plant (Epifagus virginiana) and experiments in tobacco indicate that it has an essential function which is probably not related to photosynthesis.</text>
</comment>
<comment type="subcellular location">
    <subcellularLocation>
        <location evidence="1">Plastid</location>
        <location evidence="1">Chloroplast stroma</location>
    </subcellularLocation>
</comment>
<comment type="similarity">
    <text evidence="1">Belongs to the Ycf2 family.</text>
</comment>
<dbReference type="EMBL" id="AJ428413">
    <property type="protein sequence ID" value="CAD28764.1"/>
    <property type="molecule type" value="Genomic_DNA"/>
</dbReference>
<dbReference type="EMBL" id="AJ428413">
    <property type="protein sequence ID" value="CAD28786.1"/>
    <property type="molecule type" value="Genomic_DNA"/>
</dbReference>
<dbReference type="GO" id="GO:0009570">
    <property type="term" value="C:chloroplast stroma"/>
    <property type="evidence" value="ECO:0007669"/>
    <property type="project" value="UniProtKB-SubCell"/>
</dbReference>
<dbReference type="GO" id="GO:0005524">
    <property type="term" value="F:ATP binding"/>
    <property type="evidence" value="ECO:0007669"/>
    <property type="project" value="UniProtKB-KW"/>
</dbReference>
<dbReference type="GO" id="GO:0016887">
    <property type="term" value="F:ATP hydrolysis activity"/>
    <property type="evidence" value="ECO:0007669"/>
    <property type="project" value="InterPro"/>
</dbReference>
<dbReference type="CDD" id="cd19505">
    <property type="entry name" value="RecA-like_Ycf2"/>
    <property type="match status" value="1"/>
</dbReference>
<dbReference type="Gene3D" id="3.40.50.300">
    <property type="entry name" value="P-loop containing nucleotide triphosphate hydrolases"/>
    <property type="match status" value="1"/>
</dbReference>
<dbReference type="HAMAP" id="MF_01330">
    <property type="entry name" value="Ycf2"/>
    <property type="match status" value="1"/>
</dbReference>
<dbReference type="InterPro" id="IPR003593">
    <property type="entry name" value="AAA+_ATPase"/>
</dbReference>
<dbReference type="InterPro" id="IPR003959">
    <property type="entry name" value="ATPase_AAA_core"/>
</dbReference>
<dbReference type="InterPro" id="IPR027417">
    <property type="entry name" value="P-loop_NTPase"/>
</dbReference>
<dbReference type="InterPro" id="IPR008543">
    <property type="entry name" value="Uncharacterised_Ycf2"/>
</dbReference>
<dbReference type="InterPro" id="IPR056777">
    <property type="entry name" value="Ycf2_N"/>
</dbReference>
<dbReference type="PANTHER" id="PTHR33078:SF51">
    <property type="entry name" value="PROTEIN TIC 214"/>
    <property type="match status" value="1"/>
</dbReference>
<dbReference type="PANTHER" id="PTHR33078">
    <property type="entry name" value="PROTEIN YCF2-RELATED"/>
    <property type="match status" value="1"/>
</dbReference>
<dbReference type="Pfam" id="PF00004">
    <property type="entry name" value="AAA"/>
    <property type="match status" value="1"/>
</dbReference>
<dbReference type="Pfam" id="PF05695">
    <property type="entry name" value="Ycf2"/>
    <property type="match status" value="1"/>
</dbReference>
<dbReference type="SMART" id="SM00382">
    <property type="entry name" value="AAA"/>
    <property type="match status" value="1"/>
</dbReference>
<dbReference type="SUPFAM" id="SSF52540">
    <property type="entry name" value="P-loop containing nucleoside triphosphate hydrolases"/>
    <property type="match status" value="1"/>
</dbReference>
<feature type="chain" id="PRO_0000223052" description="Protein Ycf2">
    <location>
        <begin position="1"/>
        <end position="2287"/>
    </location>
</feature>
<feature type="binding site" evidence="1">
    <location>
        <begin position="1632"/>
        <end position="1639"/>
    </location>
    <ligand>
        <name>ATP</name>
        <dbReference type="ChEBI" id="CHEBI:30616"/>
    </ligand>
</feature>
<sequence>MKRHQFKSWIFELREIKNSHYFLDSWTKFDSVGSFTHIFFHQERFMKLFDPRIWSILLSRDSQGSTSNRYFTIKGVVLLVVVVLIYRINNRNMVERKNLYLMGLLPIPMNSIGPRNDTLEESFWSSNLNRLIVSLLYLPKGKKISESCFMDPKESTWVLPITKKCIMPESNWGSRWWRNRIGKKRDSSCKISNETVAGIEISFKEKDIKYLEFLFVSYTDDPIRKDHDWEFFDRLSPRKKRNIINLNSGQLFEILVKHLICYLMSAFREKRPIEVEGFFKQQGAEATIQSNDIEHVSHLFSRNKRGISLQNCAQFHMWQFRQDLFVSWGKNRHELDFLRNVSRENLIWLDNVWLVNKDRFFSKVRNVSSNIQYDSTRSIFVQVTDSSQLKGSSDQSRDPFDSISNEDSEYHTLINQTEIQQLKERSILWGPSFLQTERTEIESDRLLKCLSGYSSMSRLFTEREKQMNNHLLPEEIEEFLGNPTRSIRSFFSDRWSELHLGSNPTERSTRDHKLLKKQQDVSFVPSRRSENQEIVDIFKIITYLQNTVSIHPISSDPGCDMVPKDEPDMDSSNKISFLNKNPFLDLFHLFHDRNKGGYRLHHDFESEERFQEMADLFTLSITEPGLVDHKGFAFSIDSYGLDQKKFLNEVFNSRDESKKKSLLVLPPIFYEENESFYRRIRKKSVRISCGNDLEDPKPKIVVFANNNIMEAVNQYRLIRNLMQIQYSTYGYIRNVSNRFFLMNRSDRNFEYGIQRDQIGNDTLNHLTIIKYTINQHLSNLKKSQKKWFDPLISRTERSMNRDPDAYRYKWSNGSKNFQEHLEHFVSEQKHRFQVVFDRLRINQYSIDWSEVIDKQDLSKSLRFFLSKSLLFLSKSLLFLSKSLPFFFVSIGNIPIHRSEIHIYELKGPNDQLCNQLLESIGVQIVHLNKLKPFLLDDHDTSQRSKFLINGGTISPNKIPKWMIDSFHTRNNRRKSFENTDSYFSMISHDRDNWLNPVKPFHRSSLISSFYKANRLRFLNHPHHFWFYCNKGFPFYVEKTRINNYDLTYGQFLNILFIRNKIFSLCVGKKKHVFLERDTISPIESQVSDIFIPNDFPQSGDETYNLYKSFHFPIRSDPFVRRAIYSIADISGTPLTEEQIVNFERTYCQPLSDMNLSDSEGKNLHQYLSFNSNMGLIHTPCSEKYLPSGKRKKRSLCLKKCVEKRQMDRTFQRDSAFSNLSKWNLFQTYMPWFLTSTGCKYLNLTLLDTFSDPLPILSSSQKFVSIFHDIMHGSDISWPIPQKKLWAILPQWNLISESSSKCLQNLLLSEEMIHRNNESPVPLIWTHLRSPNAWEFLYSILFLFLVAGYLVRTHLLFVSRASSELQTGLERIKSLMIPSYMIELRKLLDRYPTSEPNSFWLKNLFLVALEQLGDSLEKIRGSASGGNMLLGGGPAYGVKSIRSKKKYLNINLIDLISIIPNPINRITFSRNTRHLSRTSKEIYSLIRKRKNVNGDWIDDKIESWVANSDSIDDEEREFLVQFSTLTTEKGIDQILLSLTHSDHLSKNDSGYQMIEQPGSIYLRYLVDIHKKYLMNYEFNRSCLAERRIFLAHYQTITYSQTSCGANSSHFPSHGKPFSLRLALSPSRGILVIGSIGTGRSYLVKYLATNSYVPFITVFPNKFLDDKPKGYRIDDIDIDDSDDIDIDDSDDIDDDLDTELLTMTNVLTMYMTPKIDRFDITLQFELAKAMSPCIIWIPNIHDLYVNESNYLSLGLLVNYLSRDCERCSTRNILVIASTHIPQKVDPALIAPNKSNTCIKIRRLLIPQQRKHFFILSYTRGFHLEKKMFHTNGFGSITMGSNARDLVALTNEALSISITQKKSIIDTNTIRSALHRQTWDLRSQVRSVQDHGILFYQIGRAVAQNVLLSNCPIDPISIYMKKKSCKEGDSYLYKWYFELGTSMKKLTILLYLLSCSAGSVAQDLWSPPGPDEKNWITSYGFVENDSDLVHGLLEVEGALLGSSRTEKDCSQFDNDRVTLFLRSEPRNPLDMMQNGSCSIVDQRFLYEKYESEFEEGEREGALDPQQIEEDLFNHIVWAPRIWRPCGNLFDCIERTNELGFPYWARSFRGKRIIYHKEDELQENDSEFLQSGTMQYQTRDRSSKEQGFFRISQFIWDPADPFFFLFKDQPFVSVFSRREFFADEEMSKGLITSQTNPPTSIYKRWFIKNTQEKHFELLIHRQRWLRTNSSLSNGSFRSNTPSESYQYLSNLFLSNGTLLDQIAKALLRKRWLFPDEMKHLIHVTGERFPIP</sequence>
<name>YCF2_CALFG</name>
<gene>
    <name evidence="1" type="primary">ycf2-A</name>
</gene>
<gene>
    <name evidence="1" type="primary">ycf2-B</name>
</gene>
<protein>
    <recommendedName>
        <fullName evidence="1">Protein Ycf2</fullName>
    </recommendedName>
</protein>
<accession>Q7Y667</accession>